<reference key="1">
    <citation type="journal article" date="2003" name="Nat. Genet.">
        <title>Comparative analysis of the genome sequences of Bordetella pertussis, Bordetella parapertussis and Bordetella bronchiseptica.</title>
        <authorList>
            <person name="Parkhill J."/>
            <person name="Sebaihia M."/>
            <person name="Preston A."/>
            <person name="Murphy L.D."/>
            <person name="Thomson N.R."/>
            <person name="Harris D.E."/>
            <person name="Holden M.T.G."/>
            <person name="Churcher C.M."/>
            <person name="Bentley S.D."/>
            <person name="Mungall K.L."/>
            <person name="Cerdeno-Tarraga A.-M."/>
            <person name="Temple L."/>
            <person name="James K.D."/>
            <person name="Harris B."/>
            <person name="Quail M.A."/>
            <person name="Achtman M."/>
            <person name="Atkin R."/>
            <person name="Baker S."/>
            <person name="Basham D."/>
            <person name="Bason N."/>
            <person name="Cherevach I."/>
            <person name="Chillingworth T."/>
            <person name="Collins M."/>
            <person name="Cronin A."/>
            <person name="Davis P."/>
            <person name="Doggett J."/>
            <person name="Feltwell T."/>
            <person name="Goble A."/>
            <person name="Hamlin N."/>
            <person name="Hauser H."/>
            <person name="Holroyd S."/>
            <person name="Jagels K."/>
            <person name="Leather S."/>
            <person name="Moule S."/>
            <person name="Norberczak H."/>
            <person name="O'Neil S."/>
            <person name="Ormond D."/>
            <person name="Price C."/>
            <person name="Rabbinowitsch E."/>
            <person name="Rutter S."/>
            <person name="Sanders M."/>
            <person name="Saunders D."/>
            <person name="Seeger K."/>
            <person name="Sharp S."/>
            <person name="Simmonds M."/>
            <person name="Skelton J."/>
            <person name="Squares R."/>
            <person name="Squares S."/>
            <person name="Stevens K."/>
            <person name="Unwin L."/>
            <person name="Whitehead S."/>
            <person name="Barrell B.G."/>
            <person name="Maskell D.J."/>
        </authorList>
    </citation>
    <scope>NUCLEOTIDE SEQUENCE [LARGE SCALE GENOMIC DNA]</scope>
    <source>
        <strain>12822 / ATCC BAA-587 / NCTC 13253</strain>
    </source>
</reference>
<organism>
    <name type="scientific">Bordetella parapertussis (strain 12822 / ATCC BAA-587 / NCTC 13253)</name>
    <dbReference type="NCBI Taxonomy" id="257311"/>
    <lineage>
        <taxon>Bacteria</taxon>
        <taxon>Pseudomonadati</taxon>
        <taxon>Pseudomonadota</taxon>
        <taxon>Betaproteobacteria</taxon>
        <taxon>Burkholderiales</taxon>
        <taxon>Alcaligenaceae</taxon>
        <taxon>Bordetella</taxon>
    </lineage>
</organism>
<gene>
    <name evidence="1" type="primary">phnX</name>
    <name type="ordered locus">BPP2453</name>
</gene>
<protein>
    <recommendedName>
        <fullName evidence="1">Phosphonoacetaldehyde hydrolase</fullName>
        <shortName evidence="1">Phosphonatase</shortName>
        <ecNumber evidence="1">3.11.1.1</ecNumber>
    </recommendedName>
    <alternativeName>
        <fullName evidence="1">Phosphonoacetaldehyde phosphonohydrolase</fullName>
    </alternativeName>
</protein>
<proteinExistence type="inferred from homology"/>
<feature type="chain" id="PRO_0000284585" description="Phosphonoacetaldehyde hydrolase">
    <location>
        <begin position="1"/>
        <end position="276"/>
    </location>
</feature>
<feature type="active site" description="Nucleophile" evidence="1">
    <location>
        <position position="19"/>
    </location>
</feature>
<feature type="active site" description="Schiff-base intermediate with substrate" evidence="1">
    <location>
        <position position="60"/>
    </location>
</feature>
<feature type="binding site" evidence="1">
    <location>
        <position position="19"/>
    </location>
    <ligand>
        <name>Mg(2+)</name>
        <dbReference type="ChEBI" id="CHEBI:18420"/>
    </ligand>
</feature>
<feature type="binding site" evidence="1">
    <location>
        <position position="21"/>
    </location>
    <ligand>
        <name>Mg(2+)</name>
        <dbReference type="ChEBI" id="CHEBI:18420"/>
    </ligand>
</feature>
<feature type="binding site" evidence="1">
    <location>
        <position position="193"/>
    </location>
    <ligand>
        <name>Mg(2+)</name>
        <dbReference type="ChEBI" id="CHEBI:18420"/>
    </ligand>
</feature>
<keyword id="KW-0378">Hydrolase</keyword>
<keyword id="KW-0460">Magnesium</keyword>
<keyword id="KW-0479">Metal-binding</keyword>
<keyword id="KW-0704">Schiff base</keyword>
<sequence length="276" mass="29871">MNAMTLATLPVRLEALVFDWAGTLVDFGSFAPTKVFVDAFARFGVQISLEQARGPMGMGKWDHIRALCNDAAIARQYQEQFGRLPTDEDVTAIYERFLPMQLEKVAEYSQPIPGAIELLHGLRQRGLKLGSCSGYPAAVMQRVLERAEREGLALDYVVASDDVPRSRPAPAMALRNVVELGIADVAGCVKVDDTAPGVEEGRRAGMWTVGLLLSGNAAGLSLEQFLSLDEAGREAARDRARAELQAGAPHYLIDTVADLPPVLADIETRLAAGQRP</sequence>
<accession>Q7W7R1</accession>
<comment type="function">
    <text evidence="1">Involved in phosphonate degradation.</text>
</comment>
<comment type="catalytic activity">
    <reaction evidence="1">
        <text>phosphonoacetaldehyde + H2O = acetaldehyde + phosphate + H(+)</text>
        <dbReference type="Rhea" id="RHEA:18905"/>
        <dbReference type="ChEBI" id="CHEBI:15343"/>
        <dbReference type="ChEBI" id="CHEBI:15377"/>
        <dbReference type="ChEBI" id="CHEBI:15378"/>
        <dbReference type="ChEBI" id="CHEBI:43474"/>
        <dbReference type="ChEBI" id="CHEBI:58383"/>
        <dbReference type="EC" id="3.11.1.1"/>
    </reaction>
</comment>
<comment type="cofactor">
    <cofactor evidence="1">
        <name>Mg(2+)</name>
        <dbReference type="ChEBI" id="CHEBI:18420"/>
    </cofactor>
    <text evidence="1">Binds 1 Mg(2+) ion per subunit.</text>
</comment>
<comment type="subunit">
    <text evidence="1">Homodimer.</text>
</comment>
<comment type="similarity">
    <text evidence="1">Belongs to the HAD-like hydrolase superfamily. PhnX family.</text>
</comment>
<comment type="caution">
    <text evidence="2">The first enzyme involved in phosphonate degradation (PhnW, EC 2.6.1.37) is not found in this organism. The function of this enzyme is therefore uncertain.</text>
</comment>
<evidence type="ECO:0000255" key="1">
    <source>
        <dbReference type="HAMAP-Rule" id="MF_01375"/>
    </source>
</evidence>
<evidence type="ECO:0000305" key="2"/>
<name>PHNX_BORPA</name>
<dbReference type="EC" id="3.11.1.1" evidence="1"/>
<dbReference type="EMBL" id="BX640430">
    <property type="protein sequence ID" value="CAE37748.1"/>
    <property type="molecule type" value="Genomic_DNA"/>
</dbReference>
<dbReference type="RefSeq" id="WP_003820286.1">
    <property type="nucleotide sequence ID" value="NC_002928.3"/>
</dbReference>
<dbReference type="SMR" id="Q7W7R1"/>
<dbReference type="GeneID" id="69602173"/>
<dbReference type="GeneID" id="93204237"/>
<dbReference type="KEGG" id="bpa:BPP2453"/>
<dbReference type="HOGENOM" id="CLU_045011_12_0_4"/>
<dbReference type="Proteomes" id="UP000001421">
    <property type="component" value="Chromosome"/>
</dbReference>
<dbReference type="GO" id="GO:0005829">
    <property type="term" value="C:cytosol"/>
    <property type="evidence" value="ECO:0007669"/>
    <property type="project" value="TreeGrafter"/>
</dbReference>
<dbReference type="GO" id="GO:0000287">
    <property type="term" value="F:magnesium ion binding"/>
    <property type="evidence" value="ECO:0007669"/>
    <property type="project" value="UniProtKB-UniRule"/>
</dbReference>
<dbReference type="GO" id="GO:0008967">
    <property type="term" value="F:phosphoglycolate phosphatase activity"/>
    <property type="evidence" value="ECO:0007669"/>
    <property type="project" value="TreeGrafter"/>
</dbReference>
<dbReference type="GO" id="GO:0050194">
    <property type="term" value="F:phosphonoacetaldehyde hydrolase activity"/>
    <property type="evidence" value="ECO:0007669"/>
    <property type="project" value="UniProtKB-UniRule"/>
</dbReference>
<dbReference type="GO" id="GO:0006281">
    <property type="term" value="P:DNA repair"/>
    <property type="evidence" value="ECO:0007669"/>
    <property type="project" value="TreeGrafter"/>
</dbReference>
<dbReference type="GO" id="GO:0019700">
    <property type="term" value="P:organic phosphonate catabolic process"/>
    <property type="evidence" value="ECO:0007669"/>
    <property type="project" value="InterPro"/>
</dbReference>
<dbReference type="CDD" id="cd02586">
    <property type="entry name" value="HAD_PHN"/>
    <property type="match status" value="1"/>
</dbReference>
<dbReference type="FunFam" id="1.10.150.240:FF:000006">
    <property type="entry name" value="Phosphonoacetaldehyde hydrolase"/>
    <property type="match status" value="1"/>
</dbReference>
<dbReference type="Gene3D" id="3.40.50.1000">
    <property type="entry name" value="HAD superfamily/HAD-like"/>
    <property type="match status" value="1"/>
</dbReference>
<dbReference type="Gene3D" id="1.10.150.240">
    <property type="entry name" value="Putative phosphatase, domain 2"/>
    <property type="match status" value="1"/>
</dbReference>
<dbReference type="HAMAP" id="MF_01375">
    <property type="entry name" value="PhnX"/>
    <property type="match status" value="1"/>
</dbReference>
<dbReference type="InterPro" id="IPR050155">
    <property type="entry name" value="HAD-like_hydrolase_sf"/>
</dbReference>
<dbReference type="InterPro" id="IPR036412">
    <property type="entry name" value="HAD-like_sf"/>
</dbReference>
<dbReference type="InterPro" id="IPR006439">
    <property type="entry name" value="HAD-SF_hydro_IA"/>
</dbReference>
<dbReference type="InterPro" id="IPR023214">
    <property type="entry name" value="HAD_sf"/>
</dbReference>
<dbReference type="InterPro" id="IPR023198">
    <property type="entry name" value="PGP-like_dom2"/>
</dbReference>
<dbReference type="InterPro" id="IPR006323">
    <property type="entry name" value="Phosphonoacetald_hydro"/>
</dbReference>
<dbReference type="NCBIfam" id="TIGR01509">
    <property type="entry name" value="HAD-SF-IA-v3"/>
    <property type="match status" value="1"/>
</dbReference>
<dbReference type="NCBIfam" id="TIGR01422">
    <property type="entry name" value="phosphonatase"/>
    <property type="match status" value="1"/>
</dbReference>
<dbReference type="PANTHER" id="PTHR43434">
    <property type="entry name" value="PHOSPHOGLYCOLATE PHOSPHATASE"/>
    <property type="match status" value="1"/>
</dbReference>
<dbReference type="PANTHER" id="PTHR43434:SF19">
    <property type="entry name" value="PHOSPHONOACETALDEHYDE HYDROLASE"/>
    <property type="match status" value="1"/>
</dbReference>
<dbReference type="Pfam" id="PF00702">
    <property type="entry name" value="Hydrolase"/>
    <property type="match status" value="1"/>
</dbReference>
<dbReference type="SFLD" id="SFLDG01129">
    <property type="entry name" value="C1.5:_HAD__Beta-PGM__Phosphata"/>
    <property type="match status" value="1"/>
</dbReference>
<dbReference type="SFLD" id="SFLDF00038">
    <property type="entry name" value="phosphonoacetaldehyde_hydrolas"/>
    <property type="match status" value="1"/>
</dbReference>
<dbReference type="SUPFAM" id="SSF56784">
    <property type="entry name" value="HAD-like"/>
    <property type="match status" value="1"/>
</dbReference>